<evidence type="ECO:0000255" key="1">
    <source>
        <dbReference type="PROSITE-ProRule" id="PRU00625"/>
    </source>
</evidence>
<evidence type="ECO:0000256" key="2">
    <source>
        <dbReference type="SAM" id="MobiDB-lite"/>
    </source>
</evidence>
<evidence type="ECO:0000269" key="3">
    <source>
    </source>
</evidence>
<evidence type="ECO:0000269" key="4">
    <source>
    </source>
</evidence>
<evidence type="ECO:0000303" key="5">
    <source>
    </source>
</evidence>
<evidence type="ECO:0000305" key="6"/>
<evidence type="ECO:0000312" key="7">
    <source>
        <dbReference type="Araport" id="AT3G08500"/>
    </source>
</evidence>
<evidence type="ECO:0000312" key="8">
    <source>
        <dbReference type="EMBL" id="AAG50833.1"/>
    </source>
</evidence>
<feature type="chain" id="PRO_0000440860" description="Transcription factor MYB83">
    <location>
        <begin position="1"/>
        <end position="343"/>
    </location>
</feature>
<feature type="domain" description="HTH myb-type 1" evidence="1">
    <location>
        <begin position="27"/>
        <end position="79"/>
    </location>
</feature>
<feature type="domain" description="HTH myb-type 2" evidence="1">
    <location>
        <begin position="80"/>
        <end position="134"/>
    </location>
</feature>
<feature type="DNA-binding region" description="H-T-H motif" evidence="1">
    <location>
        <begin position="55"/>
        <end position="79"/>
    </location>
</feature>
<feature type="DNA-binding region" description="H-T-H motif" evidence="1">
    <location>
        <begin position="107"/>
        <end position="130"/>
    </location>
</feature>
<feature type="region of interest" description="Disordered" evidence="2">
    <location>
        <begin position="1"/>
        <end position="33"/>
    </location>
</feature>
<feature type="region of interest" description="Disordered" evidence="2">
    <location>
        <begin position="134"/>
        <end position="172"/>
    </location>
</feature>
<feature type="compositionally biased region" description="Basic and acidic residues" evidence="2">
    <location>
        <begin position="1"/>
        <end position="16"/>
    </location>
</feature>
<feature type="compositionally biased region" description="Low complexity" evidence="2">
    <location>
        <begin position="136"/>
        <end position="155"/>
    </location>
</feature>
<feature type="sequence conflict" description="In Ref. 2; AAS58504." evidence="6" ref="2">
    <original>L</original>
    <variation>P</variation>
    <location>
        <position position="64"/>
    </location>
</feature>
<feature type="sequence conflict" description="In Ref. 6; BAD43811." evidence="6" ref="6">
    <original>I</original>
    <variation>V</variation>
    <location>
        <position position="246"/>
    </location>
</feature>
<feature type="sequence conflict" description="In Ref. 5; ABK28548." evidence="6" ref="5">
    <original>H</original>
    <variation>Y</variation>
    <location>
        <position position="296"/>
    </location>
</feature>
<sequence length="343" mass="38419">MMMRKPDITTIRDKGKPNHACGGNNNKPKLRKGLWSPDEDEKLIRYMLTNGQGCWSDIARNAGLLRCGKSCRLRWINYLRPDLKRGSFSPQEEDLIFHLHSILGNRWSQIATRLPGRTDNEIKNFWNSTLKKRLKNNSNNNTSSGSSPNNSNSNSLDPRDQHVDMGGNSTSLMDDYHHDENMMTVGNTMRMDSSSPFNVGPMVNSVGLNQLYDPLMISVPDNGYHQMGNTVNVFSVNGLGDYGNTILDPISKRVSVEGDDWFIPPSENTNVIACSTSNNLNLQALDPCFNSKNLCHSESFKVGNVLGIENGSWEIENPKIGDWDLDGLIDNNSSFPFLDFQVD</sequence>
<dbReference type="EMBL" id="AF371974">
    <property type="protein sequence ID" value="AAK54738.1"/>
    <property type="molecule type" value="mRNA"/>
</dbReference>
<dbReference type="EMBL" id="AY550293">
    <property type="protein sequence ID" value="AAS58504.1"/>
    <property type="molecule type" value="mRNA"/>
</dbReference>
<dbReference type="EMBL" id="AC074395">
    <property type="protein sequence ID" value="AAG50833.1"/>
    <property type="molecule type" value="Genomic_DNA"/>
</dbReference>
<dbReference type="EMBL" id="CP002686">
    <property type="protein sequence ID" value="AEE74637.1"/>
    <property type="molecule type" value="Genomic_DNA"/>
</dbReference>
<dbReference type="EMBL" id="DQ446645">
    <property type="protein sequence ID" value="ABE65926.1"/>
    <property type="molecule type" value="mRNA"/>
</dbReference>
<dbReference type="EMBL" id="DQ653071">
    <property type="protein sequence ID" value="ABK28548.1"/>
    <property type="status" value="ALT_SEQ"/>
    <property type="molecule type" value="mRNA"/>
</dbReference>
<dbReference type="EMBL" id="AK176048">
    <property type="protein sequence ID" value="BAD43811.1"/>
    <property type="molecule type" value="mRNA"/>
</dbReference>
<dbReference type="EMBL" id="BT026506">
    <property type="protein sequence ID" value="ABH04613.1"/>
    <property type="molecule type" value="mRNA"/>
</dbReference>
<dbReference type="EMBL" id="AB493606">
    <property type="protein sequence ID" value="BAH30444.1"/>
    <property type="molecule type" value="mRNA"/>
</dbReference>
<dbReference type="EMBL" id="Z95806">
    <property type="protein sequence ID" value="CAB09238.1"/>
    <property type="molecule type" value="mRNA"/>
</dbReference>
<dbReference type="RefSeq" id="NP_187463.1">
    <property type="nucleotide sequence ID" value="NM_111685.3"/>
</dbReference>
<dbReference type="SMR" id="Q9C6U1"/>
<dbReference type="IntAct" id="Q9C6U1">
    <property type="interactions" value="1"/>
</dbReference>
<dbReference type="STRING" id="3702.Q9C6U1"/>
<dbReference type="PaxDb" id="3702-AT3G08500.1"/>
<dbReference type="EnsemblPlants" id="AT3G08500.1">
    <property type="protein sequence ID" value="AT3G08500.1"/>
    <property type="gene ID" value="AT3G08500"/>
</dbReference>
<dbReference type="GeneID" id="819997"/>
<dbReference type="Gramene" id="AT3G08500.1">
    <property type="protein sequence ID" value="AT3G08500.1"/>
    <property type="gene ID" value="AT3G08500"/>
</dbReference>
<dbReference type="KEGG" id="ath:AT3G08500"/>
<dbReference type="Araport" id="AT3G08500"/>
<dbReference type="TAIR" id="AT3G08500">
    <property type="gene designation" value="MYB83"/>
</dbReference>
<dbReference type="eggNOG" id="KOG0048">
    <property type="taxonomic scope" value="Eukaryota"/>
</dbReference>
<dbReference type="HOGENOM" id="CLU_028567_16_2_1"/>
<dbReference type="InParanoid" id="Q9C6U1"/>
<dbReference type="OMA" id="NRYDITG"/>
<dbReference type="OrthoDB" id="2143914at2759"/>
<dbReference type="PhylomeDB" id="Q9C6U1"/>
<dbReference type="PRO" id="PR:Q9C6U1"/>
<dbReference type="Proteomes" id="UP000006548">
    <property type="component" value="Chromosome 3"/>
</dbReference>
<dbReference type="ExpressionAtlas" id="Q9C6U1">
    <property type="expression patterns" value="baseline and differential"/>
</dbReference>
<dbReference type="GO" id="GO:0005634">
    <property type="term" value="C:nucleus"/>
    <property type="evidence" value="ECO:0007669"/>
    <property type="project" value="UniProtKB-SubCell"/>
</dbReference>
<dbReference type="GO" id="GO:0003700">
    <property type="term" value="F:DNA-binding transcription factor activity"/>
    <property type="evidence" value="ECO:0000250"/>
    <property type="project" value="TAIR"/>
</dbReference>
<dbReference type="GO" id="GO:0000976">
    <property type="term" value="F:transcription cis-regulatory region binding"/>
    <property type="evidence" value="ECO:0000353"/>
    <property type="project" value="TAIR"/>
</dbReference>
<dbReference type="GO" id="GO:0045893">
    <property type="term" value="P:positive regulation of DNA-templated transcription"/>
    <property type="evidence" value="ECO:0000314"/>
    <property type="project" value="TAIR"/>
</dbReference>
<dbReference type="GO" id="GO:2000652">
    <property type="term" value="P:regulation of secondary cell wall biogenesis"/>
    <property type="evidence" value="ECO:0000315"/>
    <property type="project" value="TAIR"/>
</dbReference>
<dbReference type="CDD" id="cd00167">
    <property type="entry name" value="SANT"/>
    <property type="match status" value="2"/>
</dbReference>
<dbReference type="FunFam" id="1.10.10.60:FF:000077">
    <property type="entry name" value="MYB transcription factor"/>
    <property type="match status" value="1"/>
</dbReference>
<dbReference type="FunFam" id="1.10.10.60:FF:000269">
    <property type="entry name" value="Transcription factor MYB46"/>
    <property type="match status" value="1"/>
</dbReference>
<dbReference type="Gene3D" id="1.10.10.60">
    <property type="entry name" value="Homeodomain-like"/>
    <property type="match status" value="2"/>
</dbReference>
<dbReference type="InterPro" id="IPR009057">
    <property type="entry name" value="Homeodomain-like_sf"/>
</dbReference>
<dbReference type="InterPro" id="IPR017930">
    <property type="entry name" value="Myb_dom"/>
</dbReference>
<dbReference type="InterPro" id="IPR051953">
    <property type="entry name" value="Plant_SW-associated_TFs"/>
</dbReference>
<dbReference type="InterPro" id="IPR001005">
    <property type="entry name" value="SANT/Myb"/>
</dbReference>
<dbReference type="PANTHER" id="PTHR47997">
    <property type="entry name" value="MYB DOMAIN PROTEIN 55"/>
    <property type="match status" value="1"/>
</dbReference>
<dbReference type="PANTHER" id="PTHR47997:SF45">
    <property type="entry name" value="TRANSCRIPTION FACTOR MYB83"/>
    <property type="match status" value="1"/>
</dbReference>
<dbReference type="Pfam" id="PF00249">
    <property type="entry name" value="Myb_DNA-binding"/>
    <property type="match status" value="2"/>
</dbReference>
<dbReference type="SMART" id="SM00717">
    <property type="entry name" value="SANT"/>
    <property type="match status" value="2"/>
</dbReference>
<dbReference type="SUPFAM" id="SSF46689">
    <property type="entry name" value="Homeodomain-like"/>
    <property type="match status" value="1"/>
</dbReference>
<dbReference type="PROSITE" id="PS51294">
    <property type="entry name" value="HTH_MYB"/>
    <property type="match status" value="2"/>
</dbReference>
<protein>
    <recommendedName>
        <fullName evidence="5">Transcription factor MYB83</fullName>
    </recommendedName>
    <alternativeName>
        <fullName evidence="5">Myb-related protein 83</fullName>
        <shortName evidence="5">AtMYB83</shortName>
    </alternativeName>
</protein>
<proteinExistence type="evidence at transcript level"/>
<organism>
    <name type="scientific">Arabidopsis thaliana</name>
    <name type="common">Mouse-ear cress</name>
    <dbReference type="NCBI Taxonomy" id="3702"/>
    <lineage>
        <taxon>Eukaryota</taxon>
        <taxon>Viridiplantae</taxon>
        <taxon>Streptophyta</taxon>
        <taxon>Embryophyta</taxon>
        <taxon>Tracheophyta</taxon>
        <taxon>Spermatophyta</taxon>
        <taxon>Magnoliopsida</taxon>
        <taxon>eudicotyledons</taxon>
        <taxon>Gunneridae</taxon>
        <taxon>Pentapetalae</taxon>
        <taxon>rosids</taxon>
        <taxon>malvids</taxon>
        <taxon>Brassicales</taxon>
        <taxon>Brassicaceae</taxon>
        <taxon>Camelineae</taxon>
        <taxon>Arabidopsis</taxon>
    </lineage>
</organism>
<reference key="1">
    <citation type="journal article" date="2001" name="Curr. Opin. Plant Biol.">
        <title>The R2R3-MYB gene family in Arabidopsis thaliana.</title>
        <authorList>
            <person name="Stracke R."/>
            <person name="Werber M."/>
            <person name="Weisshaar B."/>
        </authorList>
    </citation>
    <scope>NUCLEOTIDE SEQUENCE [MRNA]</scope>
    <scope>GENE FAMILY</scope>
    <scope>NOMENCLATURE</scope>
    <source>
        <strain>cv. Columbia</strain>
    </source>
</reference>
<reference key="2">
    <citation type="submission" date="2004-01" db="EMBL/GenBank/DDBJ databases">
        <title>The MYB transcription factor family in Arabidopsis: a genome-wide cloning and expression pattern analysis.</title>
        <authorList>
            <person name="Qu L.-J."/>
            <person name="Gu H."/>
        </authorList>
    </citation>
    <scope>NUCLEOTIDE SEQUENCE [MRNA]</scope>
</reference>
<reference key="3">
    <citation type="journal article" date="2000" name="Nature">
        <title>Sequence and analysis of chromosome 3 of the plant Arabidopsis thaliana.</title>
        <authorList>
            <person name="Salanoubat M."/>
            <person name="Lemcke K."/>
            <person name="Rieger M."/>
            <person name="Ansorge W."/>
            <person name="Unseld M."/>
            <person name="Fartmann B."/>
            <person name="Valle G."/>
            <person name="Bloecker H."/>
            <person name="Perez-Alonso M."/>
            <person name="Obermaier B."/>
            <person name="Delseny M."/>
            <person name="Boutry M."/>
            <person name="Grivell L.A."/>
            <person name="Mache R."/>
            <person name="Puigdomenech P."/>
            <person name="De Simone V."/>
            <person name="Choisne N."/>
            <person name="Artiguenave F."/>
            <person name="Robert C."/>
            <person name="Brottier P."/>
            <person name="Wincker P."/>
            <person name="Cattolico L."/>
            <person name="Weissenbach J."/>
            <person name="Saurin W."/>
            <person name="Quetier F."/>
            <person name="Schaefer M."/>
            <person name="Mueller-Auer S."/>
            <person name="Gabel C."/>
            <person name="Fuchs M."/>
            <person name="Benes V."/>
            <person name="Wurmbach E."/>
            <person name="Drzonek H."/>
            <person name="Erfle H."/>
            <person name="Jordan N."/>
            <person name="Bangert S."/>
            <person name="Wiedelmann R."/>
            <person name="Kranz H."/>
            <person name="Voss H."/>
            <person name="Holland R."/>
            <person name="Brandt P."/>
            <person name="Nyakatura G."/>
            <person name="Vezzi A."/>
            <person name="D'Angelo M."/>
            <person name="Pallavicini A."/>
            <person name="Toppo S."/>
            <person name="Simionati B."/>
            <person name="Conrad A."/>
            <person name="Hornischer K."/>
            <person name="Kauer G."/>
            <person name="Loehnert T.-H."/>
            <person name="Nordsiek G."/>
            <person name="Reichelt J."/>
            <person name="Scharfe M."/>
            <person name="Schoen O."/>
            <person name="Bargues M."/>
            <person name="Terol J."/>
            <person name="Climent J."/>
            <person name="Navarro P."/>
            <person name="Collado C."/>
            <person name="Perez-Perez A."/>
            <person name="Ottenwaelder B."/>
            <person name="Duchemin D."/>
            <person name="Cooke R."/>
            <person name="Laudie M."/>
            <person name="Berger-Llauro C."/>
            <person name="Purnelle B."/>
            <person name="Masuy D."/>
            <person name="de Haan M."/>
            <person name="Maarse A.C."/>
            <person name="Alcaraz J.-P."/>
            <person name="Cottet A."/>
            <person name="Casacuberta E."/>
            <person name="Monfort A."/>
            <person name="Argiriou A."/>
            <person name="Flores M."/>
            <person name="Liguori R."/>
            <person name="Vitale D."/>
            <person name="Mannhaupt G."/>
            <person name="Haase D."/>
            <person name="Schoof H."/>
            <person name="Rudd S."/>
            <person name="Zaccaria P."/>
            <person name="Mewes H.-W."/>
            <person name="Mayer K.F.X."/>
            <person name="Kaul S."/>
            <person name="Town C.D."/>
            <person name="Koo H.L."/>
            <person name="Tallon L.J."/>
            <person name="Jenkins J."/>
            <person name="Rooney T."/>
            <person name="Rizzo M."/>
            <person name="Walts A."/>
            <person name="Utterback T."/>
            <person name="Fujii C.Y."/>
            <person name="Shea T.P."/>
            <person name="Creasy T.H."/>
            <person name="Haas B."/>
            <person name="Maiti R."/>
            <person name="Wu D."/>
            <person name="Peterson J."/>
            <person name="Van Aken S."/>
            <person name="Pai G."/>
            <person name="Militscher J."/>
            <person name="Sellers P."/>
            <person name="Gill J.E."/>
            <person name="Feldblyum T.V."/>
            <person name="Preuss D."/>
            <person name="Lin X."/>
            <person name="Nierman W.C."/>
            <person name="Salzberg S.L."/>
            <person name="White O."/>
            <person name="Venter J.C."/>
            <person name="Fraser C.M."/>
            <person name="Kaneko T."/>
            <person name="Nakamura Y."/>
            <person name="Sato S."/>
            <person name="Kato T."/>
            <person name="Asamizu E."/>
            <person name="Sasamoto S."/>
            <person name="Kimura T."/>
            <person name="Idesawa K."/>
            <person name="Kawashima K."/>
            <person name="Kishida Y."/>
            <person name="Kiyokawa C."/>
            <person name="Kohara M."/>
            <person name="Matsumoto M."/>
            <person name="Matsuno A."/>
            <person name="Muraki A."/>
            <person name="Nakayama S."/>
            <person name="Nakazaki N."/>
            <person name="Shinpo S."/>
            <person name="Takeuchi C."/>
            <person name="Wada T."/>
            <person name="Watanabe A."/>
            <person name="Yamada M."/>
            <person name="Yasuda M."/>
            <person name="Tabata S."/>
        </authorList>
    </citation>
    <scope>NUCLEOTIDE SEQUENCE [LARGE SCALE GENOMIC DNA]</scope>
    <source>
        <strain>cv. Columbia</strain>
    </source>
</reference>
<reference key="4">
    <citation type="journal article" date="2017" name="Plant J.">
        <title>Araport11: a complete reannotation of the Arabidopsis thaliana reference genome.</title>
        <authorList>
            <person name="Cheng C.Y."/>
            <person name="Krishnakumar V."/>
            <person name="Chan A.P."/>
            <person name="Thibaud-Nissen F."/>
            <person name="Schobel S."/>
            <person name="Town C.D."/>
        </authorList>
    </citation>
    <scope>GENOME REANNOTATION</scope>
    <source>
        <strain>cv. Columbia</strain>
    </source>
</reference>
<reference key="5">
    <citation type="journal article" date="2006" name="Plant Biotechnol. J.">
        <title>Simultaneous high-throughput recombinational cloning of open reading frames in closed and open configurations.</title>
        <authorList>
            <person name="Underwood B.A."/>
            <person name="Vanderhaeghen R."/>
            <person name="Whitford R."/>
            <person name="Town C.D."/>
            <person name="Hilson P."/>
        </authorList>
    </citation>
    <scope>NUCLEOTIDE SEQUENCE [LARGE SCALE MRNA]</scope>
    <source>
        <strain>cv. Columbia</strain>
    </source>
</reference>
<reference key="6">
    <citation type="submission" date="2004-09" db="EMBL/GenBank/DDBJ databases">
        <title>Large-scale analysis of RIKEN Arabidopsis full-length (RAFL) cDNAs.</title>
        <authorList>
            <person name="Totoki Y."/>
            <person name="Seki M."/>
            <person name="Ishida J."/>
            <person name="Nakajima M."/>
            <person name="Enju A."/>
            <person name="Kamiya A."/>
            <person name="Narusaka M."/>
            <person name="Shin-i T."/>
            <person name="Nakagawa M."/>
            <person name="Sakamoto N."/>
            <person name="Oishi K."/>
            <person name="Kohara Y."/>
            <person name="Kobayashi M."/>
            <person name="Toyoda A."/>
            <person name="Sakaki Y."/>
            <person name="Sakurai T."/>
            <person name="Iida K."/>
            <person name="Akiyama K."/>
            <person name="Satou M."/>
            <person name="Toyoda T."/>
            <person name="Konagaya A."/>
            <person name="Carninci P."/>
            <person name="Kawai J."/>
            <person name="Hayashizaki Y."/>
            <person name="Shinozaki K."/>
        </authorList>
    </citation>
    <scope>NUCLEOTIDE SEQUENCE [LARGE SCALE MRNA]</scope>
    <source>
        <strain>cv. Columbia</strain>
    </source>
</reference>
<reference key="7">
    <citation type="submission" date="2006-08" db="EMBL/GenBank/DDBJ databases">
        <title>Arabidopsis ORF Clones.</title>
        <authorList>
            <person name="Quinitio C."/>
            <person name="Chen H."/>
            <person name="Kim C.J."/>
            <person name="Shinn P."/>
            <person name="Ecker J.R."/>
        </authorList>
    </citation>
    <scope>NUCLEOTIDE SEQUENCE [LARGE SCALE MRNA]</scope>
    <source>
        <strain>cv. Columbia</strain>
    </source>
</reference>
<reference key="8">
    <citation type="submission" date="2009-03" db="EMBL/GenBank/DDBJ databases">
        <title>ORF cloning and analysis of Arabidopsis transcription factor genes.</title>
        <authorList>
            <person name="Fujita M."/>
            <person name="Mizukado S."/>
            <person name="Seki M."/>
            <person name="Shinozaki K."/>
            <person name="Mitsuda N."/>
            <person name="Takiguchi Y."/>
            <person name="Takagi M."/>
        </authorList>
    </citation>
    <scope>NUCLEOTIDE SEQUENCE [LARGE SCALE MRNA]</scope>
</reference>
<reference key="9">
    <citation type="submission" date="1997-05" db="EMBL/GenBank/DDBJ databases">
        <title>One hundred R2R3-MYB genes in the genome of Arabidopsis thaliana.</title>
        <authorList>
            <person name="Romero I."/>
            <person name="Fuertes A."/>
            <person name="Benito M.J."/>
            <person name="Malpica J."/>
            <person name="Leyva A."/>
            <person name="Paz-Ares J."/>
        </authorList>
    </citation>
    <scope>NUCLEOTIDE SEQUENCE [MRNA] OF 73-117</scope>
    <source>
        <strain>cv. Landsberg erecta</strain>
    </source>
</reference>
<reference key="10">
    <citation type="journal article" date="2009" name="Plant Cell Physiol.">
        <title>MYB83 is a direct target of SND1 and acts redundantly with MYB46 in the regulation of secondary cell wall biosynthesis in Arabidopsis.</title>
        <authorList>
            <person name="McCarthy R.L."/>
            <person name="Zhong R."/>
            <person name="Ye Z.-H."/>
        </authorList>
    </citation>
    <scope>FUNCTION</scope>
    <scope>SUBCELLULAR LOCATION</scope>
    <scope>TISSUE SPECIFICITY</scope>
    <scope>DISRUPTION PHENOTYPE</scope>
</reference>
<reference key="11">
    <citation type="journal article" date="2012" name="Plant Cell Physiol.">
        <title>MYB46 and MYB83 bind to the SMRE sites and directly activate a suite of transcription factors and secondary wall biosynthetic genes.</title>
        <authorList>
            <person name="Zhong R."/>
            <person name="Ye Z.H."/>
        </authorList>
    </citation>
    <scope>FUNCTION</scope>
</reference>
<name>MYB83_ARATH</name>
<gene>
    <name evidence="5" type="primary">MYB83</name>
    <name evidence="7" type="ordered locus">At3g08500</name>
    <name evidence="8" type="ORF">T8G24.3</name>
</gene>
<keyword id="KW-0010">Activator</keyword>
<keyword id="KW-0238">DNA-binding</keyword>
<keyword id="KW-0539">Nucleus</keyword>
<keyword id="KW-1185">Reference proteome</keyword>
<keyword id="KW-0677">Repeat</keyword>
<keyword id="KW-0804">Transcription</keyword>
<keyword id="KW-0805">Transcription regulation</keyword>
<comment type="function">
    <text evidence="3 4">Transcription factor that acts as a molecular switch in the NAC012/SND1-mediated transcriptional network regulating secondary wall biosynthesis. Is directly activated by NAC012/SND1 and its close homologs, including NAC043/NST1, NAC066/NST2, NAC101/VND6 and NAC030/VND7. Is required for functional expression of a number of secondary wall-associated transcription factors and secondary wall biosynthetic genes involved in cellulose, xylan and lignin synthesis. Functions redundantly with MYB46 in the transcriptional regulatory cascade leading to secondary wall formation in fibers and vessels (PubMed:19808805). Transcription activator that binds to the DNA consensus sequence 5'-ACC[AT]A[AC][TC]-3', designated as the secondary wall MYB-responsive element (SMRE). Regulates directly numerous transcription factors and a number of genes involved in secondary wall biosynthesis that contain SMRE elements in their promoters (PubMed:22197883).</text>
</comment>
<comment type="subcellular location">
    <subcellularLocation>
        <location evidence="1 3">Nucleus</location>
    </subcellularLocation>
</comment>
<comment type="tissue specificity">
    <text evidence="3">Expressed specifically in fiber and vessel cells that are undergoing secondary wall thickening in floral stems. Expressed in vessels but not in xylary fibers in the developing secondary xylem of roots.</text>
</comment>
<comment type="disruption phenotype">
    <text evidence="3">No visible phenotype under normal growth conditions, but the double mutant plants myb48 and myb83 nearly lack secondary wall thickening, stop growing after developing one to two pairs of small leaves and subsequently die.</text>
</comment>
<comment type="sequence caution" evidence="6">
    <conflict type="erroneous termination">
        <sequence resource="EMBL-CDS" id="ABK28548"/>
    </conflict>
    <text>Extended C-terminus.</text>
</comment>
<accession>Q9C6U1</accession>
<accession>A0MEU8</accession>
<accession>O49805</accession>
<accession>Q67ZR9</accession>
<accession>Q6QAE3</accession>